<name>DADA_METNO</name>
<proteinExistence type="inferred from homology"/>
<sequence length="421" mass="45409">MRVLVLGGGVVGVASAYYLARAGHEVTVLDRQPGAGLETSFANAGQVSPGYSAPWAAPGIPLKAMKWLMMRHRPLVLWPRLEPRLYGWLAQMLANCTEEAYRRNKGRMVRLAEFSRDALRELRAETGIAYDHREKGTLQLFRTRKQLDHVGEDTSVLDEYGVAYEVLDEGGCIAAEPALARVRGGFVGGLRLPGDETGDAHLFTQRLAAICARRGVSFRYGVTVARLRHEAGRITGVETGTGEVLTADAYVAAMGSYTPALLRPLGLALPVYPVKGYSLTLPVTDESAAPVSTVMDETFKVAITRLGDRIRVGGTAELAGFSGTLRGPRRATLERSLRDLFPAGGDARQAQFWTGLRPMTPDGTPIVGPTVYDNLYTNTGHGTLGWTMACGSGRLLADLITGRAPEIAHEDLSGARYLKAA</sequence>
<accession>B8IJ86</accession>
<reference key="1">
    <citation type="submission" date="2009-01" db="EMBL/GenBank/DDBJ databases">
        <title>Complete sequence of chromosome of Methylobacterium nodulans ORS 2060.</title>
        <authorList>
            <consortium name="US DOE Joint Genome Institute"/>
            <person name="Lucas S."/>
            <person name="Copeland A."/>
            <person name="Lapidus A."/>
            <person name="Glavina del Rio T."/>
            <person name="Dalin E."/>
            <person name="Tice H."/>
            <person name="Bruce D."/>
            <person name="Goodwin L."/>
            <person name="Pitluck S."/>
            <person name="Sims D."/>
            <person name="Brettin T."/>
            <person name="Detter J.C."/>
            <person name="Han C."/>
            <person name="Larimer F."/>
            <person name="Land M."/>
            <person name="Hauser L."/>
            <person name="Kyrpides N."/>
            <person name="Ivanova N."/>
            <person name="Marx C.J."/>
            <person name="Richardson P."/>
        </authorList>
    </citation>
    <scope>NUCLEOTIDE SEQUENCE [LARGE SCALE GENOMIC DNA]</scope>
    <source>
        <strain>LMG 21967 / CNCM I-2342 / ORS 2060</strain>
    </source>
</reference>
<organism>
    <name type="scientific">Methylobacterium nodulans (strain LMG 21967 / CNCM I-2342 / ORS 2060)</name>
    <dbReference type="NCBI Taxonomy" id="460265"/>
    <lineage>
        <taxon>Bacteria</taxon>
        <taxon>Pseudomonadati</taxon>
        <taxon>Pseudomonadota</taxon>
        <taxon>Alphaproteobacteria</taxon>
        <taxon>Hyphomicrobiales</taxon>
        <taxon>Methylobacteriaceae</taxon>
        <taxon>Methylobacterium</taxon>
    </lineage>
</organism>
<comment type="function">
    <text evidence="1">Oxidative deamination of D-amino acids.</text>
</comment>
<comment type="catalytic activity">
    <reaction evidence="1">
        <text>a D-alpha-amino acid + A + H2O = a 2-oxocarboxylate + AH2 + NH4(+)</text>
        <dbReference type="Rhea" id="RHEA:18125"/>
        <dbReference type="ChEBI" id="CHEBI:13193"/>
        <dbReference type="ChEBI" id="CHEBI:15377"/>
        <dbReference type="ChEBI" id="CHEBI:17499"/>
        <dbReference type="ChEBI" id="CHEBI:28938"/>
        <dbReference type="ChEBI" id="CHEBI:35179"/>
        <dbReference type="ChEBI" id="CHEBI:59871"/>
    </reaction>
</comment>
<comment type="cofactor">
    <cofactor evidence="1">
        <name>FAD</name>
        <dbReference type="ChEBI" id="CHEBI:57692"/>
    </cofactor>
</comment>
<comment type="pathway">
    <text>Amino-acid degradation; D-alanine degradation; NH(3) and pyruvate from D-alanine: step 1/1.</text>
</comment>
<comment type="similarity">
    <text evidence="1">Belongs to the DadA oxidoreductase family.</text>
</comment>
<gene>
    <name evidence="1" type="primary">dadA</name>
    <name type="ordered locus">Mnod_1094</name>
</gene>
<dbReference type="EC" id="1.4.99.-" evidence="1"/>
<dbReference type="EMBL" id="CP001349">
    <property type="protein sequence ID" value="ACL56101.1"/>
    <property type="molecule type" value="Genomic_DNA"/>
</dbReference>
<dbReference type="SMR" id="B8IJ86"/>
<dbReference type="STRING" id="460265.Mnod_1094"/>
<dbReference type="KEGG" id="mno:Mnod_1094"/>
<dbReference type="eggNOG" id="COG0665">
    <property type="taxonomic scope" value="Bacteria"/>
</dbReference>
<dbReference type="HOGENOM" id="CLU_007884_9_2_5"/>
<dbReference type="OrthoDB" id="9805337at2"/>
<dbReference type="UniPathway" id="UPA00043">
    <property type="reaction ID" value="UER00498"/>
</dbReference>
<dbReference type="Proteomes" id="UP000008207">
    <property type="component" value="Chromosome"/>
</dbReference>
<dbReference type="GO" id="GO:0005737">
    <property type="term" value="C:cytoplasm"/>
    <property type="evidence" value="ECO:0007669"/>
    <property type="project" value="TreeGrafter"/>
</dbReference>
<dbReference type="GO" id="GO:0005886">
    <property type="term" value="C:plasma membrane"/>
    <property type="evidence" value="ECO:0007669"/>
    <property type="project" value="TreeGrafter"/>
</dbReference>
<dbReference type="GO" id="GO:0008718">
    <property type="term" value="F:D-amino-acid dehydrogenase activity"/>
    <property type="evidence" value="ECO:0007669"/>
    <property type="project" value="UniProtKB-UniRule"/>
</dbReference>
<dbReference type="GO" id="GO:0055130">
    <property type="term" value="P:D-alanine catabolic process"/>
    <property type="evidence" value="ECO:0007669"/>
    <property type="project" value="UniProtKB-UniPathway"/>
</dbReference>
<dbReference type="FunFam" id="3.50.50.60:FF:000020">
    <property type="entry name" value="D-amino acid dehydrogenase"/>
    <property type="match status" value="1"/>
</dbReference>
<dbReference type="Gene3D" id="3.30.9.10">
    <property type="entry name" value="D-Amino Acid Oxidase, subunit A, domain 2"/>
    <property type="match status" value="1"/>
</dbReference>
<dbReference type="Gene3D" id="3.50.50.60">
    <property type="entry name" value="FAD/NAD(P)-binding domain"/>
    <property type="match status" value="2"/>
</dbReference>
<dbReference type="HAMAP" id="MF_01202">
    <property type="entry name" value="DadA"/>
    <property type="match status" value="1"/>
</dbReference>
<dbReference type="InterPro" id="IPR023080">
    <property type="entry name" value="DadA"/>
</dbReference>
<dbReference type="InterPro" id="IPR006076">
    <property type="entry name" value="FAD-dep_OxRdtase"/>
</dbReference>
<dbReference type="InterPro" id="IPR036188">
    <property type="entry name" value="FAD/NAD-bd_sf"/>
</dbReference>
<dbReference type="NCBIfam" id="NF001933">
    <property type="entry name" value="PRK00711.1"/>
    <property type="match status" value="1"/>
</dbReference>
<dbReference type="PANTHER" id="PTHR13847:SF280">
    <property type="entry name" value="D-AMINO ACID DEHYDROGENASE"/>
    <property type="match status" value="1"/>
</dbReference>
<dbReference type="PANTHER" id="PTHR13847">
    <property type="entry name" value="SARCOSINE DEHYDROGENASE-RELATED"/>
    <property type="match status" value="1"/>
</dbReference>
<dbReference type="Pfam" id="PF01266">
    <property type="entry name" value="DAO"/>
    <property type="match status" value="1"/>
</dbReference>
<dbReference type="SUPFAM" id="SSF54373">
    <property type="entry name" value="FAD-linked reductases, C-terminal domain"/>
    <property type="match status" value="1"/>
</dbReference>
<dbReference type="SUPFAM" id="SSF51905">
    <property type="entry name" value="FAD/NAD(P)-binding domain"/>
    <property type="match status" value="1"/>
</dbReference>
<keyword id="KW-0274">FAD</keyword>
<keyword id="KW-0285">Flavoprotein</keyword>
<keyword id="KW-0560">Oxidoreductase</keyword>
<keyword id="KW-1185">Reference proteome</keyword>
<protein>
    <recommendedName>
        <fullName evidence="1">D-amino acid dehydrogenase</fullName>
        <ecNumber evidence="1">1.4.99.-</ecNumber>
    </recommendedName>
</protein>
<feature type="chain" id="PRO_1000164642" description="D-amino acid dehydrogenase">
    <location>
        <begin position="1"/>
        <end position="421"/>
    </location>
</feature>
<feature type="binding site" evidence="1">
    <location>
        <begin position="3"/>
        <end position="17"/>
    </location>
    <ligand>
        <name>FAD</name>
        <dbReference type="ChEBI" id="CHEBI:57692"/>
    </ligand>
</feature>
<evidence type="ECO:0000255" key="1">
    <source>
        <dbReference type="HAMAP-Rule" id="MF_01202"/>
    </source>
</evidence>